<dbReference type="EC" id="1.14.-.-"/>
<dbReference type="EMBL" id="Y10493">
    <property type="protein sequence ID" value="CAA71517.1"/>
    <property type="molecule type" value="mRNA"/>
</dbReference>
<dbReference type="PIR" id="T07120">
    <property type="entry name" value="T07120"/>
</dbReference>
<dbReference type="RefSeq" id="NP_001304412.2">
    <property type="nucleotide sequence ID" value="NM_001317483.2"/>
</dbReference>
<dbReference type="SMR" id="O81974"/>
<dbReference type="STRING" id="3847.O81974"/>
<dbReference type="PaxDb" id="3847-GLYMA11G06690.1"/>
<dbReference type="GeneID" id="100780605"/>
<dbReference type="KEGG" id="gmx:100780605"/>
<dbReference type="eggNOG" id="KOG0156">
    <property type="taxonomic scope" value="Eukaryota"/>
</dbReference>
<dbReference type="InParanoid" id="O81974"/>
<dbReference type="OrthoDB" id="2789670at2759"/>
<dbReference type="Proteomes" id="UP000008827">
    <property type="component" value="Unplaced"/>
</dbReference>
<dbReference type="GO" id="GO:0020037">
    <property type="term" value="F:heme binding"/>
    <property type="evidence" value="ECO:0007669"/>
    <property type="project" value="InterPro"/>
</dbReference>
<dbReference type="GO" id="GO:0005506">
    <property type="term" value="F:iron ion binding"/>
    <property type="evidence" value="ECO:0007669"/>
    <property type="project" value="InterPro"/>
</dbReference>
<dbReference type="GO" id="GO:0004497">
    <property type="term" value="F:monooxygenase activity"/>
    <property type="evidence" value="ECO:0007669"/>
    <property type="project" value="UniProtKB-KW"/>
</dbReference>
<dbReference type="GO" id="GO:0016705">
    <property type="term" value="F:oxidoreductase activity, acting on paired donors, with incorporation or reduction of molecular oxygen"/>
    <property type="evidence" value="ECO:0007669"/>
    <property type="project" value="InterPro"/>
</dbReference>
<dbReference type="CDD" id="cd11072">
    <property type="entry name" value="CYP71-like"/>
    <property type="match status" value="1"/>
</dbReference>
<dbReference type="FunFam" id="1.10.630.10:FF:000008">
    <property type="entry name" value="Cytochrome P450 71D8"/>
    <property type="match status" value="1"/>
</dbReference>
<dbReference type="Gene3D" id="1.10.630.10">
    <property type="entry name" value="Cytochrome P450"/>
    <property type="match status" value="1"/>
</dbReference>
<dbReference type="InterPro" id="IPR052306">
    <property type="entry name" value="CYP450_71D"/>
</dbReference>
<dbReference type="InterPro" id="IPR001128">
    <property type="entry name" value="Cyt_P450"/>
</dbReference>
<dbReference type="InterPro" id="IPR017972">
    <property type="entry name" value="Cyt_P450_CS"/>
</dbReference>
<dbReference type="InterPro" id="IPR002401">
    <property type="entry name" value="Cyt_P450_E_grp-I"/>
</dbReference>
<dbReference type="InterPro" id="IPR036396">
    <property type="entry name" value="Cyt_P450_sf"/>
</dbReference>
<dbReference type="PANTHER" id="PTHR47953:SF16">
    <property type="entry name" value="CYTOCHROME P450 71D8"/>
    <property type="match status" value="1"/>
</dbReference>
<dbReference type="PANTHER" id="PTHR47953">
    <property type="entry name" value="OS08G0105600 PROTEIN"/>
    <property type="match status" value="1"/>
</dbReference>
<dbReference type="Pfam" id="PF00067">
    <property type="entry name" value="p450"/>
    <property type="match status" value="1"/>
</dbReference>
<dbReference type="PRINTS" id="PR00463">
    <property type="entry name" value="EP450I"/>
</dbReference>
<dbReference type="PRINTS" id="PR00385">
    <property type="entry name" value="P450"/>
</dbReference>
<dbReference type="SUPFAM" id="SSF48264">
    <property type="entry name" value="Cytochrome P450"/>
    <property type="match status" value="1"/>
</dbReference>
<dbReference type="PROSITE" id="PS00086">
    <property type="entry name" value="CYTOCHROME_P450"/>
    <property type="match status" value="1"/>
</dbReference>
<accession>O81974</accession>
<keyword id="KW-0349">Heme</keyword>
<keyword id="KW-0408">Iron</keyword>
<keyword id="KW-0479">Metal-binding</keyword>
<keyword id="KW-0503">Monooxygenase</keyword>
<keyword id="KW-0560">Oxidoreductase</keyword>
<keyword id="KW-1185">Reference proteome</keyword>
<feature type="chain" id="PRO_0000052119" description="Cytochrome P450 71D8">
    <location>
        <begin position="1"/>
        <end position="504"/>
    </location>
</feature>
<feature type="binding site" description="axial binding residue" evidence="1">
    <location>
        <position position="444"/>
    </location>
    <ligand>
        <name>heme</name>
        <dbReference type="ChEBI" id="CHEBI:30413"/>
    </ligand>
    <ligandPart>
        <name>Fe</name>
        <dbReference type="ChEBI" id="CHEBI:18248"/>
    </ligandPart>
</feature>
<comment type="cofactor">
    <cofactor evidence="1">
        <name>heme</name>
        <dbReference type="ChEBI" id="CHEBI:30413"/>
    </cofactor>
</comment>
<comment type="induction">
    <text>By fungal elicitor.</text>
</comment>
<comment type="similarity">
    <text evidence="2">Belongs to the cytochrome P450 family.</text>
</comment>
<proteinExistence type="evidence at transcript level"/>
<protein>
    <recommendedName>
        <fullName>Cytochrome P450 71D8</fullName>
        <ecNumber>1.14.-.-</ecNumber>
    </recommendedName>
    <alternativeName>
        <fullName>Cytochrome P450 CP7</fullName>
    </alternativeName>
</protein>
<organism>
    <name type="scientific">Glycine max</name>
    <name type="common">Soybean</name>
    <name type="synonym">Glycine hispida</name>
    <dbReference type="NCBI Taxonomy" id="3847"/>
    <lineage>
        <taxon>Eukaryota</taxon>
        <taxon>Viridiplantae</taxon>
        <taxon>Streptophyta</taxon>
        <taxon>Embryophyta</taxon>
        <taxon>Tracheophyta</taxon>
        <taxon>Spermatophyta</taxon>
        <taxon>Magnoliopsida</taxon>
        <taxon>eudicotyledons</taxon>
        <taxon>Gunneridae</taxon>
        <taxon>Pentapetalae</taxon>
        <taxon>rosids</taxon>
        <taxon>fabids</taxon>
        <taxon>Fabales</taxon>
        <taxon>Fabaceae</taxon>
        <taxon>Papilionoideae</taxon>
        <taxon>50 kb inversion clade</taxon>
        <taxon>NPAAA clade</taxon>
        <taxon>indigoferoid/millettioid clade</taxon>
        <taxon>Phaseoleae</taxon>
        <taxon>Glycine</taxon>
        <taxon>Glycine subgen. Soja</taxon>
    </lineage>
</organism>
<name>C71D8_SOYBN</name>
<reference key="1">
    <citation type="journal article" date="1998" name="Mol. Gen. Genet.">
        <title>Identification of elicitor-induced cytochrome P450s of soybean (Glycine max L.) using differential display of mRNA.</title>
        <authorList>
            <person name="Schopfer C.R."/>
            <person name="Ebel J."/>
        </authorList>
    </citation>
    <scope>NUCLEOTIDE SEQUENCE [MRNA]</scope>
    <source>
        <strain>cv. Harosoy 63</strain>
    </source>
</reference>
<evidence type="ECO:0000250" key="1"/>
<evidence type="ECO:0000305" key="2"/>
<gene>
    <name type="primary">CYP71D8</name>
</gene>
<sequence length="504" mass="57579">MEYSPLSIVITFFVFLLLHWLVKTYKQKSSHKLPPGPWRLPIIGNLHQLALAASLPDQALQKLVRKYGPLMHLQLGEISTLVVSSPKMAMEMMKTHDVHFVQRPQLLAPQFMVYGATDIAFAPYGDYWRQIRKICTLELLSAKRVQSFSHIRQDENKKLIQSIHSSAGSPIDLSGKLFSLLGTTVSRAAFGKENDDQDEFMSLVRKAITMTGGFEVDDMFPSLKPLHLLTRQKAKVEHVHQRADKILEDILRKHMEKRTRVKEGNGSEAEQEDLVDVLLRLKESGSLEVPMTMENIKAVIWNIFAAGTDTSASTLEWAMSEMMKNPKVKEKAQAELRQIFKGKEIIRETDLEELSYLKSVIKETLRLHPPSQLIPRECIISTNIDGYEIPIKTKVMINTWAIGRDPQYWSDADRFIPERFNDSSIDFKGNSFEYIPFGAGRRMCPGMTFGLASITLPLALLLYHFNWELPNKMKPEDLDMDEHFGMTVARKNKLFLIPTVYEAS</sequence>